<proteinExistence type="inferred from homology"/>
<protein>
    <recommendedName>
        <fullName evidence="1">Large ribosomal subunit protein uL24</fullName>
    </recommendedName>
    <alternativeName>
        <fullName evidence="2">50S ribosomal protein L24</fullName>
    </alternativeName>
</protein>
<gene>
    <name evidence="1" type="primary">rplX</name>
    <name type="ordered locus">xcc-b100_3448</name>
</gene>
<keyword id="KW-0687">Ribonucleoprotein</keyword>
<keyword id="KW-0689">Ribosomal protein</keyword>
<keyword id="KW-0694">RNA-binding</keyword>
<keyword id="KW-0699">rRNA-binding</keyword>
<feature type="chain" id="PRO_1000142054" description="Large ribosomal subunit protein uL24">
    <location>
        <begin position="1"/>
        <end position="105"/>
    </location>
</feature>
<evidence type="ECO:0000255" key="1">
    <source>
        <dbReference type="HAMAP-Rule" id="MF_01326"/>
    </source>
</evidence>
<evidence type="ECO:0000305" key="2"/>
<dbReference type="EMBL" id="AM920689">
    <property type="protein sequence ID" value="CAP52813.1"/>
    <property type="molecule type" value="Genomic_DNA"/>
</dbReference>
<dbReference type="SMR" id="B0RU71"/>
<dbReference type="KEGG" id="xca:xcc-b100_3448"/>
<dbReference type="HOGENOM" id="CLU_093315_2_2_6"/>
<dbReference type="Proteomes" id="UP000001188">
    <property type="component" value="Chromosome"/>
</dbReference>
<dbReference type="GO" id="GO:1990904">
    <property type="term" value="C:ribonucleoprotein complex"/>
    <property type="evidence" value="ECO:0007669"/>
    <property type="project" value="UniProtKB-KW"/>
</dbReference>
<dbReference type="GO" id="GO:0005840">
    <property type="term" value="C:ribosome"/>
    <property type="evidence" value="ECO:0007669"/>
    <property type="project" value="UniProtKB-KW"/>
</dbReference>
<dbReference type="GO" id="GO:0019843">
    <property type="term" value="F:rRNA binding"/>
    <property type="evidence" value="ECO:0007669"/>
    <property type="project" value="UniProtKB-UniRule"/>
</dbReference>
<dbReference type="GO" id="GO:0003735">
    <property type="term" value="F:structural constituent of ribosome"/>
    <property type="evidence" value="ECO:0007669"/>
    <property type="project" value="InterPro"/>
</dbReference>
<dbReference type="GO" id="GO:0006412">
    <property type="term" value="P:translation"/>
    <property type="evidence" value="ECO:0007669"/>
    <property type="project" value="UniProtKB-UniRule"/>
</dbReference>
<dbReference type="CDD" id="cd06089">
    <property type="entry name" value="KOW_RPL26"/>
    <property type="match status" value="1"/>
</dbReference>
<dbReference type="FunFam" id="2.30.30.30:FF:000004">
    <property type="entry name" value="50S ribosomal protein L24"/>
    <property type="match status" value="1"/>
</dbReference>
<dbReference type="Gene3D" id="2.30.30.30">
    <property type="match status" value="1"/>
</dbReference>
<dbReference type="HAMAP" id="MF_01326_B">
    <property type="entry name" value="Ribosomal_uL24_B"/>
    <property type="match status" value="1"/>
</dbReference>
<dbReference type="InterPro" id="IPR005824">
    <property type="entry name" value="KOW"/>
</dbReference>
<dbReference type="InterPro" id="IPR014722">
    <property type="entry name" value="Rib_uL2_dom2"/>
</dbReference>
<dbReference type="InterPro" id="IPR003256">
    <property type="entry name" value="Ribosomal_uL24"/>
</dbReference>
<dbReference type="InterPro" id="IPR041988">
    <property type="entry name" value="Ribosomal_uL24_KOW"/>
</dbReference>
<dbReference type="InterPro" id="IPR008991">
    <property type="entry name" value="Translation_prot_SH3-like_sf"/>
</dbReference>
<dbReference type="NCBIfam" id="TIGR01079">
    <property type="entry name" value="rplX_bact"/>
    <property type="match status" value="1"/>
</dbReference>
<dbReference type="PANTHER" id="PTHR12903">
    <property type="entry name" value="MITOCHONDRIAL RIBOSOMAL PROTEIN L24"/>
    <property type="match status" value="1"/>
</dbReference>
<dbReference type="Pfam" id="PF00467">
    <property type="entry name" value="KOW"/>
    <property type="match status" value="1"/>
</dbReference>
<dbReference type="Pfam" id="PF17136">
    <property type="entry name" value="ribosomal_L24"/>
    <property type="match status" value="1"/>
</dbReference>
<dbReference type="SMART" id="SM00739">
    <property type="entry name" value="KOW"/>
    <property type="match status" value="1"/>
</dbReference>
<dbReference type="SUPFAM" id="SSF50104">
    <property type="entry name" value="Translation proteins SH3-like domain"/>
    <property type="match status" value="1"/>
</dbReference>
<reference key="1">
    <citation type="journal article" date="2008" name="J. Biotechnol.">
        <title>The genome of Xanthomonas campestris pv. campestris B100 and its use for the reconstruction of metabolic pathways involved in xanthan biosynthesis.</title>
        <authorList>
            <person name="Vorhoelter F.-J."/>
            <person name="Schneiker S."/>
            <person name="Goesmann A."/>
            <person name="Krause L."/>
            <person name="Bekel T."/>
            <person name="Kaiser O."/>
            <person name="Linke B."/>
            <person name="Patschkowski T."/>
            <person name="Rueckert C."/>
            <person name="Schmid J."/>
            <person name="Sidhu V.K."/>
            <person name="Sieber V."/>
            <person name="Tauch A."/>
            <person name="Watt S.A."/>
            <person name="Weisshaar B."/>
            <person name="Becker A."/>
            <person name="Niehaus K."/>
            <person name="Puehler A."/>
        </authorList>
    </citation>
    <scope>NUCLEOTIDE SEQUENCE [LARGE SCALE GENOMIC DNA]</scope>
    <source>
        <strain>B100</strain>
    </source>
</reference>
<comment type="function">
    <text evidence="1">One of two assembly initiator proteins, it binds directly to the 5'-end of the 23S rRNA, where it nucleates assembly of the 50S subunit.</text>
</comment>
<comment type="function">
    <text evidence="1">One of the proteins that surrounds the polypeptide exit tunnel on the outside of the subunit.</text>
</comment>
<comment type="subunit">
    <text evidence="1">Part of the 50S ribosomal subunit.</text>
</comment>
<comment type="similarity">
    <text evidence="1">Belongs to the universal ribosomal protein uL24 family.</text>
</comment>
<organism>
    <name type="scientific">Xanthomonas campestris pv. campestris (strain B100)</name>
    <dbReference type="NCBI Taxonomy" id="509169"/>
    <lineage>
        <taxon>Bacteria</taxon>
        <taxon>Pseudomonadati</taxon>
        <taxon>Pseudomonadota</taxon>
        <taxon>Gammaproteobacteria</taxon>
        <taxon>Lysobacterales</taxon>
        <taxon>Lysobacteraceae</taxon>
        <taxon>Xanthomonas</taxon>
    </lineage>
</organism>
<name>RL24_XANCB</name>
<sequence length="105" mass="11240">MANRIKKGDQVVINTGKDKGKQGEVVRVEGDRVIVSNANVIKRHTKPNPQAGVAGGVVEREASIHISNVNIVNPATGKGERVGFKVLEDGRKLRVFRSSGEALDA</sequence>
<accession>B0RU71</accession>